<sequence length="43" mass="4662">METATLVAISISGLLVSFTGYALYTAFGQPSQQLRDPFEEHGD</sequence>
<reference key="1">
    <citation type="journal article" date="2006" name="Genes Genet. Syst.">
        <title>Complete nucleotide sequence of the cotton (Gossypium barbadense L.) chloroplast genome with a comparative analysis of sequences among 9 dicot plants.</title>
        <authorList>
            <person name="Ibrahim R.I.H."/>
            <person name="Azuma J."/>
            <person name="Sakamoto M."/>
        </authorList>
    </citation>
    <scope>NUCLEOTIDE SEQUENCE [LARGE SCALE GENOMIC DNA]</scope>
</reference>
<keyword id="KW-0150">Chloroplast</keyword>
<keyword id="KW-0472">Membrane</keyword>
<keyword id="KW-0934">Plastid</keyword>
<keyword id="KW-0793">Thylakoid</keyword>
<keyword id="KW-0812">Transmembrane</keyword>
<keyword id="KW-1133">Transmembrane helix</keyword>
<evidence type="ECO:0000255" key="1">
    <source>
        <dbReference type="HAMAP-Rule" id="MF_00293"/>
    </source>
</evidence>
<protein>
    <recommendedName>
        <fullName evidence="1">Protein PsbN</fullName>
    </recommendedName>
</protein>
<accession>A0ZZ63</accession>
<proteinExistence type="inferred from homology"/>
<comment type="function">
    <text evidence="1">May play a role in photosystem I and II biogenesis.</text>
</comment>
<comment type="subcellular location">
    <subcellularLocation>
        <location evidence="1">Plastid</location>
        <location evidence="1">Chloroplast thylakoid membrane</location>
        <topology evidence="1">Single-pass membrane protein</topology>
    </subcellularLocation>
</comment>
<comment type="similarity">
    <text evidence="1">Belongs to the PsbN family.</text>
</comment>
<comment type="caution">
    <text evidence="1">Originally thought to be a component of PSII; based on experiments in Synechocystis, N.tabacum and barley, and its absence from PSII in T.elongatus and T.vulcanus, this is probably not true.</text>
</comment>
<gene>
    <name evidence="1" type="primary">psbN</name>
</gene>
<name>PSBN_GOSBA</name>
<dbReference type="EMBL" id="AP009123">
    <property type="protein sequence ID" value="BAF41275.1"/>
    <property type="molecule type" value="Genomic_DNA"/>
</dbReference>
<dbReference type="RefSeq" id="YP_913215.1">
    <property type="nucleotide sequence ID" value="NC_008641.1"/>
</dbReference>
<dbReference type="SMR" id="A0ZZ63"/>
<dbReference type="GeneID" id="4575228"/>
<dbReference type="OrthoDB" id="1860403at2759"/>
<dbReference type="GO" id="GO:0009535">
    <property type="term" value="C:chloroplast thylakoid membrane"/>
    <property type="evidence" value="ECO:0007669"/>
    <property type="project" value="UniProtKB-SubCell"/>
</dbReference>
<dbReference type="GO" id="GO:0015979">
    <property type="term" value="P:photosynthesis"/>
    <property type="evidence" value="ECO:0007669"/>
    <property type="project" value="InterPro"/>
</dbReference>
<dbReference type="HAMAP" id="MF_00293">
    <property type="entry name" value="PSII_PsbN"/>
    <property type="match status" value="1"/>
</dbReference>
<dbReference type="InterPro" id="IPR003398">
    <property type="entry name" value="PSII_PsbN"/>
</dbReference>
<dbReference type="PANTHER" id="PTHR35326">
    <property type="entry name" value="PROTEIN PSBN"/>
    <property type="match status" value="1"/>
</dbReference>
<dbReference type="PANTHER" id="PTHR35326:SF3">
    <property type="entry name" value="PROTEIN PSBN"/>
    <property type="match status" value="1"/>
</dbReference>
<dbReference type="Pfam" id="PF02468">
    <property type="entry name" value="PsbN"/>
    <property type="match status" value="1"/>
</dbReference>
<feature type="chain" id="PRO_0000276270" description="Protein PsbN">
    <location>
        <begin position="1"/>
        <end position="43"/>
    </location>
</feature>
<feature type="transmembrane region" description="Helical" evidence="1">
    <location>
        <begin position="5"/>
        <end position="27"/>
    </location>
</feature>
<geneLocation type="chloroplast"/>
<organism>
    <name type="scientific">Gossypium barbadense</name>
    <name type="common">Sea Island cotton</name>
    <name type="synonym">Hibiscus barbadensis</name>
    <dbReference type="NCBI Taxonomy" id="3634"/>
    <lineage>
        <taxon>Eukaryota</taxon>
        <taxon>Viridiplantae</taxon>
        <taxon>Streptophyta</taxon>
        <taxon>Embryophyta</taxon>
        <taxon>Tracheophyta</taxon>
        <taxon>Spermatophyta</taxon>
        <taxon>Magnoliopsida</taxon>
        <taxon>eudicotyledons</taxon>
        <taxon>Gunneridae</taxon>
        <taxon>Pentapetalae</taxon>
        <taxon>rosids</taxon>
        <taxon>malvids</taxon>
        <taxon>Malvales</taxon>
        <taxon>Malvaceae</taxon>
        <taxon>Malvoideae</taxon>
        <taxon>Gossypium</taxon>
    </lineage>
</organism>